<proteinExistence type="inferred from homology"/>
<reference key="1">
    <citation type="submission" date="2008-02" db="EMBL/GenBank/DDBJ databases">
        <title>Complete sequence of chromosome 1 of Burkholderia cenocepacia MC0-3.</title>
        <authorList>
            <person name="Copeland A."/>
            <person name="Lucas S."/>
            <person name="Lapidus A."/>
            <person name="Barry K."/>
            <person name="Bruce D."/>
            <person name="Goodwin L."/>
            <person name="Glavina del Rio T."/>
            <person name="Dalin E."/>
            <person name="Tice H."/>
            <person name="Pitluck S."/>
            <person name="Chain P."/>
            <person name="Malfatti S."/>
            <person name="Shin M."/>
            <person name="Vergez L."/>
            <person name="Schmutz J."/>
            <person name="Larimer F."/>
            <person name="Land M."/>
            <person name="Hauser L."/>
            <person name="Kyrpides N."/>
            <person name="Mikhailova N."/>
            <person name="Tiedje J."/>
            <person name="Richardson P."/>
        </authorList>
    </citation>
    <scope>NUCLEOTIDE SEQUENCE [LARGE SCALE GENOMIC DNA]</scope>
    <source>
        <strain>MC0-3</strain>
    </source>
</reference>
<comment type="function">
    <text evidence="1">Transfers a GMP moiety from GTP to Mo-molybdopterin (Mo-MPT) cofactor (Moco or molybdenum cofactor) to form Mo-molybdopterin guanine dinucleotide (Mo-MGD) cofactor.</text>
</comment>
<comment type="catalytic activity">
    <reaction evidence="1">
        <text>Mo-molybdopterin + GTP + H(+) = Mo-molybdopterin guanine dinucleotide + diphosphate</text>
        <dbReference type="Rhea" id="RHEA:34243"/>
        <dbReference type="ChEBI" id="CHEBI:15378"/>
        <dbReference type="ChEBI" id="CHEBI:33019"/>
        <dbReference type="ChEBI" id="CHEBI:37565"/>
        <dbReference type="ChEBI" id="CHEBI:71302"/>
        <dbReference type="ChEBI" id="CHEBI:71310"/>
        <dbReference type="EC" id="2.7.7.77"/>
    </reaction>
</comment>
<comment type="cofactor">
    <cofactor evidence="1">
        <name>Mg(2+)</name>
        <dbReference type="ChEBI" id="CHEBI:18420"/>
    </cofactor>
</comment>
<comment type="subunit">
    <text evidence="1">Monomer.</text>
</comment>
<comment type="subcellular location">
    <subcellularLocation>
        <location evidence="1">Cytoplasm</location>
    </subcellularLocation>
</comment>
<comment type="domain">
    <text evidence="1">The N-terminal domain determines nucleotide recognition and specific binding, while the C-terminal domain determines the specific binding to the target protein.</text>
</comment>
<comment type="similarity">
    <text evidence="1">Belongs to the MobA family.</text>
</comment>
<name>MOBA_BURO0</name>
<gene>
    <name evidence="1" type="primary">mobA</name>
    <name type="ordered locus">Bcenmc03_1067</name>
</gene>
<sequence>MPAPASPSIAGLLLAGGRATRMDGVDKGLQLLDGTPLALHVLRRLAPQVDETLISANRHADRYAELGAPFDARIIADETPDFPGPLAGLLAGMRAARAPLVACSPCDTPYLPVDLVARLRAALDAQQAAIAMAVTVDAQQVRSPQPTFALLRTSLADDLAARLAAGDRKVRAWYARHKTVEVEFRDERAFYNANSWQELAALARR</sequence>
<feature type="chain" id="PRO_1000115795" description="Molybdenum cofactor guanylyltransferase">
    <location>
        <begin position="1"/>
        <end position="205"/>
    </location>
</feature>
<feature type="binding site" evidence="1">
    <location>
        <begin position="14"/>
        <end position="16"/>
    </location>
    <ligand>
        <name>GTP</name>
        <dbReference type="ChEBI" id="CHEBI:37565"/>
    </ligand>
</feature>
<feature type="binding site" evidence="1">
    <location>
        <position position="27"/>
    </location>
    <ligand>
        <name>GTP</name>
        <dbReference type="ChEBI" id="CHEBI:37565"/>
    </ligand>
</feature>
<feature type="binding site" evidence="1">
    <location>
        <position position="77"/>
    </location>
    <ligand>
        <name>GTP</name>
        <dbReference type="ChEBI" id="CHEBI:37565"/>
    </ligand>
</feature>
<feature type="binding site" evidence="1">
    <location>
        <position position="107"/>
    </location>
    <ligand>
        <name>GTP</name>
        <dbReference type="ChEBI" id="CHEBI:37565"/>
    </ligand>
</feature>
<feature type="binding site" evidence="1">
    <location>
        <position position="107"/>
    </location>
    <ligand>
        <name>Mg(2+)</name>
        <dbReference type="ChEBI" id="CHEBI:18420"/>
    </ligand>
</feature>
<accession>B1JY88</accession>
<keyword id="KW-0963">Cytoplasm</keyword>
<keyword id="KW-0342">GTP-binding</keyword>
<keyword id="KW-0460">Magnesium</keyword>
<keyword id="KW-0479">Metal-binding</keyword>
<keyword id="KW-0501">Molybdenum cofactor biosynthesis</keyword>
<keyword id="KW-0547">Nucleotide-binding</keyword>
<keyword id="KW-0808">Transferase</keyword>
<dbReference type="EC" id="2.7.7.77" evidence="1"/>
<dbReference type="EMBL" id="CP000958">
    <property type="protein sequence ID" value="ACA90244.1"/>
    <property type="molecule type" value="Genomic_DNA"/>
</dbReference>
<dbReference type="RefSeq" id="WP_012328144.1">
    <property type="nucleotide sequence ID" value="NC_010508.1"/>
</dbReference>
<dbReference type="SMR" id="B1JY88"/>
<dbReference type="GeneID" id="83047861"/>
<dbReference type="KEGG" id="bcm:Bcenmc03_1067"/>
<dbReference type="HOGENOM" id="CLU_055597_5_1_4"/>
<dbReference type="Proteomes" id="UP000002169">
    <property type="component" value="Chromosome 1"/>
</dbReference>
<dbReference type="GO" id="GO:0005737">
    <property type="term" value="C:cytoplasm"/>
    <property type="evidence" value="ECO:0007669"/>
    <property type="project" value="UniProtKB-SubCell"/>
</dbReference>
<dbReference type="GO" id="GO:0005525">
    <property type="term" value="F:GTP binding"/>
    <property type="evidence" value="ECO:0007669"/>
    <property type="project" value="UniProtKB-UniRule"/>
</dbReference>
<dbReference type="GO" id="GO:0046872">
    <property type="term" value="F:metal ion binding"/>
    <property type="evidence" value="ECO:0007669"/>
    <property type="project" value="UniProtKB-KW"/>
</dbReference>
<dbReference type="GO" id="GO:0061603">
    <property type="term" value="F:molybdenum cofactor guanylyltransferase activity"/>
    <property type="evidence" value="ECO:0007669"/>
    <property type="project" value="UniProtKB-EC"/>
</dbReference>
<dbReference type="GO" id="GO:1902758">
    <property type="term" value="P:bis(molybdopterin guanine dinucleotide)molybdenum biosynthetic process"/>
    <property type="evidence" value="ECO:0007669"/>
    <property type="project" value="TreeGrafter"/>
</dbReference>
<dbReference type="CDD" id="cd02503">
    <property type="entry name" value="MobA"/>
    <property type="match status" value="1"/>
</dbReference>
<dbReference type="Gene3D" id="3.90.550.10">
    <property type="entry name" value="Spore Coat Polysaccharide Biosynthesis Protein SpsA, Chain A"/>
    <property type="match status" value="1"/>
</dbReference>
<dbReference type="HAMAP" id="MF_00316">
    <property type="entry name" value="MobA"/>
    <property type="match status" value="1"/>
</dbReference>
<dbReference type="InterPro" id="IPR025877">
    <property type="entry name" value="MobA-like_NTP_Trfase"/>
</dbReference>
<dbReference type="InterPro" id="IPR013482">
    <property type="entry name" value="Molybde_CF_guanTrfase"/>
</dbReference>
<dbReference type="InterPro" id="IPR029044">
    <property type="entry name" value="Nucleotide-diphossugar_trans"/>
</dbReference>
<dbReference type="NCBIfam" id="TIGR02665">
    <property type="entry name" value="molyb_mobA"/>
    <property type="match status" value="1"/>
</dbReference>
<dbReference type="PANTHER" id="PTHR19136">
    <property type="entry name" value="MOLYBDENUM COFACTOR GUANYLYLTRANSFERASE"/>
    <property type="match status" value="1"/>
</dbReference>
<dbReference type="PANTHER" id="PTHR19136:SF81">
    <property type="entry name" value="MOLYBDENUM COFACTOR GUANYLYLTRANSFERASE"/>
    <property type="match status" value="1"/>
</dbReference>
<dbReference type="Pfam" id="PF12804">
    <property type="entry name" value="NTP_transf_3"/>
    <property type="match status" value="1"/>
</dbReference>
<dbReference type="SUPFAM" id="SSF53448">
    <property type="entry name" value="Nucleotide-diphospho-sugar transferases"/>
    <property type="match status" value="1"/>
</dbReference>
<organism>
    <name type="scientific">Burkholderia orbicola (strain MC0-3)</name>
    <dbReference type="NCBI Taxonomy" id="406425"/>
    <lineage>
        <taxon>Bacteria</taxon>
        <taxon>Pseudomonadati</taxon>
        <taxon>Pseudomonadota</taxon>
        <taxon>Betaproteobacteria</taxon>
        <taxon>Burkholderiales</taxon>
        <taxon>Burkholderiaceae</taxon>
        <taxon>Burkholderia</taxon>
        <taxon>Burkholderia cepacia complex</taxon>
        <taxon>Burkholderia orbicola</taxon>
    </lineage>
</organism>
<protein>
    <recommendedName>
        <fullName evidence="1">Molybdenum cofactor guanylyltransferase</fullName>
        <shortName evidence="1">MoCo guanylyltransferase</shortName>
        <ecNumber evidence="1">2.7.7.77</ecNumber>
    </recommendedName>
    <alternativeName>
        <fullName evidence="1">GTP:molybdopterin guanylyltransferase</fullName>
    </alternativeName>
    <alternativeName>
        <fullName evidence="1">Mo-MPT guanylyltransferase</fullName>
    </alternativeName>
    <alternativeName>
        <fullName evidence="1">Molybdopterin guanylyltransferase</fullName>
    </alternativeName>
    <alternativeName>
        <fullName evidence="1">Molybdopterin-guanine dinucleotide synthase</fullName>
        <shortName evidence="1">MGD synthase</shortName>
    </alternativeName>
</protein>
<evidence type="ECO:0000255" key="1">
    <source>
        <dbReference type="HAMAP-Rule" id="MF_00316"/>
    </source>
</evidence>